<dbReference type="EC" id="2.8.1.1" evidence="1"/>
<dbReference type="EMBL" id="CP000890">
    <property type="protein sequence ID" value="ABX77583.1"/>
    <property type="molecule type" value="Genomic_DNA"/>
</dbReference>
<dbReference type="RefSeq" id="WP_010957677.1">
    <property type="nucleotide sequence ID" value="NC_010117.1"/>
</dbReference>
<dbReference type="SMR" id="A9NC75"/>
<dbReference type="KEGG" id="cbs:COXBURSA331_A0701"/>
<dbReference type="HOGENOM" id="CLU_089574_14_0_6"/>
<dbReference type="GO" id="GO:0005737">
    <property type="term" value="C:cytoplasm"/>
    <property type="evidence" value="ECO:0007669"/>
    <property type="project" value="UniProtKB-SubCell"/>
</dbReference>
<dbReference type="GO" id="GO:0004792">
    <property type="term" value="F:thiosulfate-cyanide sulfurtransferase activity"/>
    <property type="evidence" value="ECO:0007669"/>
    <property type="project" value="UniProtKB-UniRule"/>
</dbReference>
<dbReference type="GO" id="GO:0006071">
    <property type="term" value="P:glycerol metabolic process"/>
    <property type="evidence" value="ECO:0007669"/>
    <property type="project" value="UniProtKB-UniRule"/>
</dbReference>
<dbReference type="CDD" id="cd01444">
    <property type="entry name" value="GlpE_ST"/>
    <property type="match status" value="1"/>
</dbReference>
<dbReference type="Gene3D" id="3.40.250.10">
    <property type="entry name" value="Rhodanese-like domain"/>
    <property type="match status" value="1"/>
</dbReference>
<dbReference type="HAMAP" id="MF_01009">
    <property type="entry name" value="Thiosulf_sulfurtr"/>
    <property type="match status" value="1"/>
</dbReference>
<dbReference type="InterPro" id="IPR050229">
    <property type="entry name" value="GlpE_sulfurtransferase"/>
</dbReference>
<dbReference type="InterPro" id="IPR001763">
    <property type="entry name" value="Rhodanese-like_dom"/>
</dbReference>
<dbReference type="InterPro" id="IPR036873">
    <property type="entry name" value="Rhodanese-like_dom_sf"/>
</dbReference>
<dbReference type="InterPro" id="IPR023695">
    <property type="entry name" value="Thiosulf_sulfurTrfase"/>
</dbReference>
<dbReference type="NCBIfam" id="NF001195">
    <property type="entry name" value="PRK00162.1"/>
    <property type="match status" value="1"/>
</dbReference>
<dbReference type="PANTHER" id="PTHR43031">
    <property type="entry name" value="FAD-DEPENDENT OXIDOREDUCTASE"/>
    <property type="match status" value="1"/>
</dbReference>
<dbReference type="PANTHER" id="PTHR43031:SF6">
    <property type="entry name" value="THIOSULFATE SULFURTRANSFERASE GLPE"/>
    <property type="match status" value="1"/>
</dbReference>
<dbReference type="Pfam" id="PF00581">
    <property type="entry name" value="Rhodanese"/>
    <property type="match status" value="1"/>
</dbReference>
<dbReference type="SMART" id="SM00450">
    <property type="entry name" value="RHOD"/>
    <property type="match status" value="1"/>
</dbReference>
<dbReference type="SUPFAM" id="SSF52821">
    <property type="entry name" value="Rhodanese/Cell cycle control phosphatase"/>
    <property type="match status" value="1"/>
</dbReference>
<dbReference type="PROSITE" id="PS50206">
    <property type="entry name" value="RHODANESE_3"/>
    <property type="match status" value="1"/>
</dbReference>
<comment type="function">
    <text evidence="1">Transferase that catalyzes the transfer of sulfur from thiosulfate to thiophilic acceptors such as cyanide or dithiols. May function in a CysM-independent thiosulfate assimilation pathway by catalyzing the conversion of thiosulfate to sulfite, which can then be used for L-cysteine biosynthesis.</text>
</comment>
<comment type="catalytic activity">
    <reaction evidence="1">
        <text>thiosulfate + hydrogen cyanide = thiocyanate + sulfite + 2 H(+)</text>
        <dbReference type="Rhea" id="RHEA:16881"/>
        <dbReference type="ChEBI" id="CHEBI:15378"/>
        <dbReference type="ChEBI" id="CHEBI:17359"/>
        <dbReference type="ChEBI" id="CHEBI:18022"/>
        <dbReference type="ChEBI" id="CHEBI:18407"/>
        <dbReference type="ChEBI" id="CHEBI:33542"/>
        <dbReference type="EC" id="2.8.1.1"/>
    </reaction>
</comment>
<comment type="catalytic activity">
    <reaction evidence="1">
        <text>thiosulfate + [thioredoxin]-dithiol = [thioredoxin]-disulfide + hydrogen sulfide + sulfite + 2 H(+)</text>
        <dbReference type="Rhea" id="RHEA:83859"/>
        <dbReference type="Rhea" id="RHEA-COMP:10698"/>
        <dbReference type="Rhea" id="RHEA-COMP:10700"/>
        <dbReference type="ChEBI" id="CHEBI:15378"/>
        <dbReference type="ChEBI" id="CHEBI:17359"/>
        <dbReference type="ChEBI" id="CHEBI:29919"/>
        <dbReference type="ChEBI" id="CHEBI:29950"/>
        <dbReference type="ChEBI" id="CHEBI:33542"/>
        <dbReference type="ChEBI" id="CHEBI:50058"/>
    </reaction>
</comment>
<comment type="subcellular location">
    <subcellularLocation>
        <location evidence="1">Cytoplasm</location>
    </subcellularLocation>
</comment>
<comment type="similarity">
    <text evidence="1">Belongs to the GlpE family.</text>
</comment>
<name>GLPE_COXBR</name>
<proteinExistence type="inferred from homology"/>
<protein>
    <recommendedName>
        <fullName evidence="1">Thiosulfate sulfurtransferase GlpE</fullName>
        <ecNumber evidence="1">2.8.1.1</ecNumber>
    </recommendedName>
</protein>
<accession>A9NC75</accession>
<keyword id="KW-0963">Cytoplasm</keyword>
<keyword id="KW-0808">Transferase</keyword>
<evidence type="ECO:0000255" key="1">
    <source>
        <dbReference type="HAMAP-Rule" id="MF_01009"/>
    </source>
</evidence>
<reference key="1">
    <citation type="submission" date="2007-11" db="EMBL/GenBank/DDBJ databases">
        <title>Genome sequencing of phylogenetically and phenotypically diverse Coxiella burnetii isolates.</title>
        <authorList>
            <person name="Seshadri R."/>
            <person name="Samuel J.E."/>
        </authorList>
    </citation>
    <scope>NUCLEOTIDE SEQUENCE [LARGE SCALE GENOMIC DNA]</scope>
    <source>
        <strain>RSA 331 / Henzerling II</strain>
    </source>
</reference>
<gene>
    <name evidence="1" type="primary">glpE</name>
    <name type="ordered locus">COXBURSA331_A0701</name>
</gene>
<feature type="chain" id="PRO_1000084028" description="Thiosulfate sulfurtransferase GlpE">
    <location>
        <begin position="1"/>
        <end position="107"/>
    </location>
</feature>
<feature type="domain" description="Rhodanese" evidence="1">
    <location>
        <begin position="16"/>
        <end position="104"/>
    </location>
</feature>
<feature type="active site" description="Cysteine persulfide intermediate" evidence="1">
    <location>
        <position position="64"/>
    </location>
</feature>
<organism>
    <name type="scientific">Coxiella burnetii (strain RSA 331 / Henzerling II)</name>
    <dbReference type="NCBI Taxonomy" id="360115"/>
    <lineage>
        <taxon>Bacteria</taxon>
        <taxon>Pseudomonadati</taxon>
        <taxon>Pseudomonadota</taxon>
        <taxon>Gammaproteobacteria</taxon>
        <taxon>Legionellales</taxon>
        <taxon>Coxiellaceae</taxon>
        <taxon>Coxiella</taxon>
    </lineage>
</organism>
<sequence>MMYKQISHLEAWELVKKRDIVIADVRDQDSYEEEHIANALHLSMAKLQEYSEKADKEKPVLVYCYHGISSQSVAQHLVEQGFKEVYSLIGGFETWKAHHPTSDANKN</sequence>